<dbReference type="EC" id="4.2.3.110"/>
<dbReference type="EMBL" id="AF051901">
    <property type="protein sequence ID" value="AAC26018.1"/>
    <property type="molecule type" value="mRNA"/>
</dbReference>
<dbReference type="SMR" id="O81193"/>
<dbReference type="KEGG" id="ag:AAC26018"/>
<dbReference type="BRENDA" id="4.2.3.108">
    <property type="organism ID" value="5564"/>
</dbReference>
<dbReference type="BRENDA" id="4.2.3.110">
    <property type="organism ID" value="5564"/>
</dbReference>
<dbReference type="BRENDA" id="4.2.3.114">
    <property type="organism ID" value="5564"/>
</dbReference>
<dbReference type="SABIO-RK" id="O81193"/>
<dbReference type="UniPathway" id="UPA00731"/>
<dbReference type="GO" id="GO:0009507">
    <property type="term" value="C:chloroplast"/>
    <property type="evidence" value="ECO:0007669"/>
    <property type="project" value="UniProtKB-SubCell"/>
</dbReference>
<dbReference type="GO" id="GO:0000287">
    <property type="term" value="F:magnesium ion binding"/>
    <property type="evidence" value="ECO:0007669"/>
    <property type="project" value="InterPro"/>
</dbReference>
<dbReference type="GO" id="GO:0010333">
    <property type="term" value="F:terpene synthase activity"/>
    <property type="evidence" value="ECO:0007669"/>
    <property type="project" value="InterPro"/>
</dbReference>
<dbReference type="GO" id="GO:0016102">
    <property type="term" value="P:diterpenoid biosynthetic process"/>
    <property type="evidence" value="ECO:0007669"/>
    <property type="project" value="InterPro"/>
</dbReference>
<dbReference type="CDD" id="cd00684">
    <property type="entry name" value="Terpene_cyclase_plant_C1"/>
    <property type="match status" value="1"/>
</dbReference>
<dbReference type="FunFam" id="1.10.600.10:FF:000007">
    <property type="entry name" value="Isoprene synthase, chloroplastic"/>
    <property type="match status" value="1"/>
</dbReference>
<dbReference type="FunFam" id="1.50.10.130:FF:000001">
    <property type="entry name" value="Isoprene synthase, chloroplastic"/>
    <property type="match status" value="1"/>
</dbReference>
<dbReference type="Gene3D" id="1.10.600.10">
    <property type="entry name" value="Farnesyl Diphosphate Synthase"/>
    <property type="match status" value="1"/>
</dbReference>
<dbReference type="Gene3D" id="1.50.10.130">
    <property type="entry name" value="Terpene synthase, N-terminal domain"/>
    <property type="match status" value="1"/>
</dbReference>
<dbReference type="InterPro" id="IPR008949">
    <property type="entry name" value="Isoprenoid_synthase_dom_sf"/>
</dbReference>
<dbReference type="InterPro" id="IPR034741">
    <property type="entry name" value="Terpene_cyclase-like_1_C"/>
</dbReference>
<dbReference type="InterPro" id="IPR044814">
    <property type="entry name" value="Terpene_cyclase_plant_C1"/>
</dbReference>
<dbReference type="InterPro" id="IPR001906">
    <property type="entry name" value="Terpene_synth_N"/>
</dbReference>
<dbReference type="InterPro" id="IPR036965">
    <property type="entry name" value="Terpene_synth_N_sf"/>
</dbReference>
<dbReference type="InterPro" id="IPR050148">
    <property type="entry name" value="Terpene_synthase-like"/>
</dbReference>
<dbReference type="InterPro" id="IPR005630">
    <property type="entry name" value="Terpene_synthase_metal-bd"/>
</dbReference>
<dbReference type="InterPro" id="IPR008930">
    <property type="entry name" value="Terpenoid_cyclase/PrenylTrfase"/>
</dbReference>
<dbReference type="PANTHER" id="PTHR31225">
    <property type="entry name" value="OS04G0344100 PROTEIN-RELATED"/>
    <property type="match status" value="1"/>
</dbReference>
<dbReference type="PANTHER" id="PTHR31225:SF9">
    <property type="entry name" value="TERPENE SYNTHASE 10"/>
    <property type="match status" value="1"/>
</dbReference>
<dbReference type="Pfam" id="PF01397">
    <property type="entry name" value="Terpene_synth"/>
    <property type="match status" value="1"/>
</dbReference>
<dbReference type="Pfam" id="PF03936">
    <property type="entry name" value="Terpene_synth_C"/>
    <property type="match status" value="1"/>
</dbReference>
<dbReference type="SFLD" id="SFLDG01019">
    <property type="entry name" value="Terpene_Cyclase_Like_1_C_Termi"/>
    <property type="match status" value="1"/>
</dbReference>
<dbReference type="SFLD" id="SFLDG01604">
    <property type="entry name" value="Terpene_Cyclase_Like_1_C_Termi"/>
    <property type="match status" value="1"/>
</dbReference>
<dbReference type="SFLD" id="SFLDG01014">
    <property type="entry name" value="Terpene_Cyclase_Like_1_N-term"/>
    <property type="match status" value="1"/>
</dbReference>
<dbReference type="SUPFAM" id="SSF48239">
    <property type="entry name" value="Terpenoid cyclases/Protein prenyltransferases"/>
    <property type="match status" value="1"/>
</dbReference>
<dbReference type="SUPFAM" id="SSF48576">
    <property type="entry name" value="Terpenoid synthases"/>
    <property type="match status" value="1"/>
</dbReference>
<accession>O81193</accession>
<reference key="1">
    <citation type="journal article" date="1998" name="J. Biol. Chem.">
        <title>Monoterpene synthases from common sage (Salvia officinalis). cDNA isolation, characterization, and functional expression of (+)-sabinene synthase, 1,8-cineole synthase, and (+)-bornyl diphosphate synthase.</title>
        <authorList>
            <person name="Wise M.L."/>
            <person name="Savage T.J."/>
            <person name="Katahira E."/>
            <person name="Croteau R."/>
        </authorList>
    </citation>
    <scope>NUCLEOTIDE SEQUENCE [MRNA]</scope>
    <scope>FUNCTION</scope>
    <scope>CATALYTIC ACTIVITY</scope>
</reference>
<organism>
    <name type="scientific">Salvia officinalis</name>
    <name type="common">Sage</name>
    <dbReference type="NCBI Taxonomy" id="38868"/>
    <lineage>
        <taxon>Eukaryota</taxon>
        <taxon>Viridiplantae</taxon>
        <taxon>Streptophyta</taxon>
        <taxon>Embryophyta</taxon>
        <taxon>Tracheophyta</taxon>
        <taxon>Spermatophyta</taxon>
        <taxon>Magnoliopsida</taxon>
        <taxon>eudicotyledons</taxon>
        <taxon>Gunneridae</taxon>
        <taxon>Pentapetalae</taxon>
        <taxon>asterids</taxon>
        <taxon>lamiids</taxon>
        <taxon>Lamiales</taxon>
        <taxon>Lamiaceae</taxon>
        <taxon>Nepetoideae</taxon>
        <taxon>Mentheae</taxon>
        <taxon>Salviinae</taxon>
        <taxon>Salvia</taxon>
        <taxon>Salvia incertae sedis</taxon>
    </lineage>
</organism>
<sequence length="590" mass="68942">MSSISINIAMPLNSLHNFERKPSKAWSTSCTAPAARLRASSSLQQEKPHQIRRSGDYQPSLWDFNYIQSLNTPYKEQRHFNRQAELIMQVRMLLKVKMEAIQQLELIDDLQYLGLSYFFQDEIKQILSSIHNEPRYFHNNDLYFTALGFRILRQHGFNVSEDVFDCFKIEKCSDFNANLAQDTKGMLQLYEASFLLREGEDTLELARRFSTRSLREKFDEGGDEIDEDLSSWIRHSLDLPLHWRVQGLEARWFLDAYARRPDMNPLIFKLAKLNFNIVQATYQEELKDISRWWNSSCLAEKLPFVRDRIVECFFWAIAAFEPHQYSYQRKMAAVIITFITIIDDVYDVYGTIEELELLTDMIRRWDNKSISQLPYYMQVCYLALYNFVSERAYDILKDQHFNSIPYLQRSWVSLVEGYLKEAYWYYNGYKPSLEEYLNNAKISISAPTIISQLYFTLANSIDETAIESLYQYHNILYLSGTILRLADDLGTSQHELERGDVPKAIQCYMNDTNASEREAVEHVKFLIREAWKEMNTVTTASDCPFTDDLVAAAANLARAAQFIYLDGDGHGVQHSEIHQQMGGLLFQPYV</sequence>
<keyword id="KW-0150">Chloroplast</keyword>
<keyword id="KW-0456">Lyase</keyword>
<keyword id="KW-0460">Magnesium</keyword>
<keyword id="KW-0479">Metal-binding</keyword>
<keyword id="KW-0934">Plastid</keyword>
<keyword id="KW-0809">Transit peptide</keyword>
<evidence type="ECO:0000250" key="1"/>
<evidence type="ECO:0000255" key="2"/>
<evidence type="ECO:0000269" key="3">
    <source>
    </source>
</evidence>
<evidence type="ECO:0000305" key="4"/>
<protein>
    <recommendedName>
        <fullName>(+)-sabinene synthase, chloroplastic</fullName>
        <shortName>SSS</shortName>
        <ecNumber>4.2.3.110</ecNumber>
    </recommendedName>
</protein>
<feature type="transit peptide" description="Chloroplast" evidence="2">
    <location>
        <begin position="1"/>
        <end position="51"/>
    </location>
</feature>
<feature type="chain" id="PRO_0000033621" description="(+)-sabinene synthase, chloroplastic">
    <location>
        <begin position="52"/>
        <end position="590"/>
    </location>
</feature>
<feature type="short sequence motif" description="DDXXD motif">
    <location>
        <begin position="343"/>
        <end position="347"/>
    </location>
</feature>
<feature type="binding site" evidence="1">
    <location>
        <position position="343"/>
    </location>
    <ligand>
        <name>Mg(2+)</name>
        <dbReference type="ChEBI" id="CHEBI:18420"/>
        <label>1</label>
    </ligand>
</feature>
<feature type="binding site" evidence="1">
    <location>
        <position position="343"/>
    </location>
    <ligand>
        <name>Mg(2+)</name>
        <dbReference type="ChEBI" id="CHEBI:18420"/>
        <label>2</label>
    </ligand>
</feature>
<feature type="binding site" evidence="1">
    <location>
        <position position="347"/>
    </location>
    <ligand>
        <name>Mg(2+)</name>
        <dbReference type="ChEBI" id="CHEBI:18420"/>
        <label>1</label>
    </ligand>
</feature>
<feature type="binding site" evidence="1">
    <location>
        <position position="347"/>
    </location>
    <ligand>
        <name>Mg(2+)</name>
        <dbReference type="ChEBI" id="CHEBI:18420"/>
        <label>2</label>
    </ligand>
</feature>
<feature type="binding site" evidence="1">
    <location>
        <position position="487"/>
    </location>
    <ligand>
        <name>Mg(2+)</name>
        <dbReference type="ChEBI" id="CHEBI:18420"/>
        <label>3</label>
    </ligand>
</feature>
<feature type="binding site" evidence="1">
    <location>
        <position position="491"/>
    </location>
    <ligand>
        <name>Mg(2+)</name>
        <dbReference type="ChEBI" id="CHEBI:18420"/>
        <label>3</label>
    </ligand>
</feature>
<feature type="binding site" evidence="1">
    <location>
        <position position="495"/>
    </location>
    <ligand>
        <name>Mg(2+)</name>
        <dbReference type="ChEBI" id="CHEBI:18420"/>
        <label>3</label>
    </ligand>
</feature>
<proteinExistence type="evidence at protein level"/>
<name>SSS_SALOF</name>
<comment type="function">
    <text evidence="3">Catalyzes the formation of the (-)-3-isothujone precursor sabinene from geranyl diphosphate. The enzyme also produces significant amounts of gamma-terpinene, terpinolene and limonene.</text>
</comment>
<comment type="catalytic activity">
    <reaction evidence="3">
        <text>(2E)-geranyl diphosphate = (1R,5R)-sabinene + diphosphate</text>
        <dbReference type="Rhea" id="RHEA:32547"/>
        <dbReference type="ChEBI" id="CHEBI:33019"/>
        <dbReference type="ChEBI" id="CHEBI:50029"/>
        <dbReference type="ChEBI" id="CHEBI:58057"/>
        <dbReference type="EC" id="4.2.3.110"/>
    </reaction>
</comment>
<comment type="cofactor">
    <cofactor evidence="1">
        <name>Mg(2+)</name>
        <dbReference type="ChEBI" id="CHEBI:18420"/>
    </cofactor>
    <text evidence="1">Binds 3 Mg(2+) ions per subunit.</text>
</comment>
<comment type="pathway">
    <text>Terpene metabolism; sabinene hydrate biosynthesis.</text>
</comment>
<comment type="subunit">
    <text>Monomer.</text>
</comment>
<comment type="subcellular location">
    <subcellularLocation>
        <location>Plastid</location>
        <location>Chloroplast</location>
    </subcellularLocation>
</comment>
<comment type="domain">
    <text>The Asp-Asp-Xaa-Xaa-Asp/Glu (DDXXD/E) motif is important for the catalytic activity, presumably through binding to Mg(2+).</text>
</comment>
<comment type="similarity">
    <text evidence="4">Belongs to the terpene synthase family.</text>
</comment>